<comment type="function">
    <text evidence="1">Component of chylomicrons, very low-density lipoproteins (VLDL), low-density lipoproteins (LDL), and high-density lipoproteins (HDL) in plasma. Plays an important role in lipoprotein metabolism as an activator of lipoprotein lipase. Both proapolipoprotein C-II and apolipoprotein C-II can activate lipoprotein lipase.</text>
</comment>
<comment type="subcellular location">
    <subcellularLocation>
        <location evidence="1">Secreted</location>
    </subcellularLocation>
</comment>
<comment type="PTM">
    <text evidence="1">Proapolipoprotein C-II is synthesized as a sialic acid containing glycoprotein which is subsequently desialylated prior to its proteolytic processing.</text>
</comment>
<comment type="PTM">
    <text evidence="1">Proapolipoprotein C-II, the major form found in plasma undergoes proteolytic cleavage of its N-terminal hexapeptide to generate apolipoprotein C-II, which occurs as the minor form in plasma.</text>
</comment>
<comment type="similarity">
    <text evidence="3">Belongs to the apolipoprotein C2 family.</text>
</comment>
<protein>
    <recommendedName>
        <fullName>Apolipoprotein C-II</fullName>
        <shortName>Apo-CII</shortName>
        <shortName>ApoC-II</shortName>
    </recommendedName>
    <alternativeName>
        <fullName>Apolipoprotein C2</fullName>
    </alternativeName>
    <component>
        <recommendedName>
            <fullName>Proapolipoprotein C-II</fullName>
            <shortName>ProapoC-II</shortName>
        </recommendedName>
    </component>
</protein>
<sequence length="101" mass="11285">MGIRYLLVLVLVLLVLGCEVQGAHMPQQDEATTSSLFTQMQESFYGYWGIAKSAAQGLYEKTYLTTMDEKIREIYNKSTAAVSTYAGIFTDQLLSMLKGDQ</sequence>
<accession>A0A2U3Y4D7</accession>
<dbReference type="EMBL" id="APMU01085777">
    <property type="status" value="NOT_ANNOTATED_CDS"/>
    <property type="molecule type" value="Genomic_DNA"/>
</dbReference>
<dbReference type="RefSeq" id="XP_006738588.1">
    <property type="nucleotide sequence ID" value="XM_006738525.2"/>
</dbReference>
<dbReference type="RefSeq" id="XP_006738589.1">
    <property type="nucleotide sequence ID" value="XM_006738526.1"/>
</dbReference>
<dbReference type="SMR" id="A0A2U3Y4D7"/>
<dbReference type="STRING" id="9713.A0A2U3Y4D7"/>
<dbReference type="GeneID" id="102732291"/>
<dbReference type="KEGG" id="lww:102732291"/>
<dbReference type="CTD" id="344"/>
<dbReference type="OrthoDB" id="9881800at2759"/>
<dbReference type="Proteomes" id="UP000245341">
    <property type="component" value="Unplaced"/>
</dbReference>
<dbReference type="GO" id="GO:0042627">
    <property type="term" value="C:chylomicron"/>
    <property type="evidence" value="ECO:0007669"/>
    <property type="project" value="UniProtKB-KW"/>
</dbReference>
<dbReference type="GO" id="GO:0034364">
    <property type="term" value="C:high-density lipoprotein particle"/>
    <property type="evidence" value="ECO:0007669"/>
    <property type="project" value="UniProtKB-KW"/>
</dbReference>
<dbReference type="GO" id="GO:0034362">
    <property type="term" value="C:low-density lipoprotein particle"/>
    <property type="evidence" value="ECO:0007669"/>
    <property type="project" value="UniProtKB-KW"/>
</dbReference>
<dbReference type="GO" id="GO:0034361">
    <property type="term" value="C:very-low-density lipoprotein particle"/>
    <property type="evidence" value="ECO:0007669"/>
    <property type="project" value="UniProtKB-KW"/>
</dbReference>
<dbReference type="GO" id="GO:0016004">
    <property type="term" value="F:phospholipase activator activity"/>
    <property type="evidence" value="ECO:0007669"/>
    <property type="project" value="TreeGrafter"/>
</dbReference>
<dbReference type="GO" id="GO:0043274">
    <property type="term" value="F:phospholipase binding"/>
    <property type="evidence" value="ECO:0007669"/>
    <property type="project" value="TreeGrafter"/>
</dbReference>
<dbReference type="GO" id="GO:0016042">
    <property type="term" value="P:lipid catabolic process"/>
    <property type="evidence" value="ECO:0007669"/>
    <property type="project" value="UniProtKB-KW"/>
</dbReference>
<dbReference type="GO" id="GO:0006869">
    <property type="term" value="P:lipid transport"/>
    <property type="evidence" value="ECO:0007669"/>
    <property type="project" value="UniProtKB-KW"/>
</dbReference>
<dbReference type="GO" id="GO:0060697">
    <property type="term" value="P:positive regulation of phospholipid catabolic process"/>
    <property type="evidence" value="ECO:0007669"/>
    <property type="project" value="TreeGrafter"/>
</dbReference>
<dbReference type="Gene3D" id="1.10.1440.10">
    <property type="entry name" value="Apolipoprotein C-II"/>
    <property type="match status" value="1"/>
</dbReference>
<dbReference type="InterPro" id="IPR008019">
    <property type="entry name" value="Apo-CII"/>
</dbReference>
<dbReference type="InterPro" id="IPR023121">
    <property type="entry name" value="ApoC-II_dom_sf"/>
</dbReference>
<dbReference type="PANTHER" id="PTHR16566">
    <property type="entry name" value="APOLIPOPROTEIN C-II"/>
    <property type="match status" value="1"/>
</dbReference>
<dbReference type="PANTHER" id="PTHR16566:SF0">
    <property type="entry name" value="APOLIPOPROTEIN C-II"/>
    <property type="match status" value="1"/>
</dbReference>
<dbReference type="Pfam" id="PF05355">
    <property type="entry name" value="Apo-CII"/>
    <property type="match status" value="1"/>
</dbReference>
<evidence type="ECO:0000250" key="1">
    <source>
        <dbReference type="UniProtKB" id="P02655"/>
    </source>
</evidence>
<evidence type="ECO:0000255" key="2"/>
<evidence type="ECO:0000305" key="3"/>
<keyword id="KW-0162">Chylomicron</keyword>
<keyword id="KW-0325">Glycoprotein</keyword>
<keyword id="KW-0345">HDL</keyword>
<keyword id="KW-0427">LDL</keyword>
<keyword id="KW-0442">Lipid degradation</keyword>
<keyword id="KW-0443">Lipid metabolism</keyword>
<keyword id="KW-0445">Lipid transport</keyword>
<keyword id="KW-0449">Lipoprotein</keyword>
<keyword id="KW-1185">Reference proteome</keyword>
<keyword id="KW-0964">Secreted</keyword>
<keyword id="KW-0730">Sialic acid</keyword>
<keyword id="KW-0732">Signal</keyword>
<keyword id="KW-0813">Transport</keyword>
<keyword id="KW-0850">VLDL</keyword>
<gene>
    <name type="primary">APOC2</name>
</gene>
<name>APOC2_LEPWE</name>
<organism>
    <name type="scientific">Leptonychotes weddellii</name>
    <name type="common">Weddell seal</name>
    <name type="synonym">Otaria weddellii</name>
    <dbReference type="NCBI Taxonomy" id="9713"/>
    <lineage>
        <taxon>Eukaryota</taxon>
        <taxon>Metazoa</taxon>
        <taxon>Chordata</taxon>
        <taxon>Craniata</taxon>
        <taxon>Vertebrata</taxon>
        <taxon>Euteleostomi</taxon>
        <taxon>Mammalia</taxon>
        <taxon>Eutheria</taxon>
        <taxon>Laurasiatheria</taxon>
        <taxon>Carnivora</taxon>
        <taxon>Caniformia</taxon>
        <taxon>Pinnipedia</taxon>
        <taxon>Phocidae</taxon>
        <taxon>Monachinae</taxon>
        <taxon>Lobodontini</taxon>
        <taxon>Leptonychotes</taxon>
    </lineage>
</organism>
<proteinExistence type="inferred from homology"/>
<feature type="signal peptide" evidence="2">
    <location>
        <begin position="1"/>
        <end position="22"/>
    </location>
</feature>
<feature type="chain" id="PRO_5015818369" description="Proapolipoprotein C-II">
    <location>
        <begin position="23"/>
        <end position="101"/>
    </location>
</feature>
<feature type="chain" id="PRO_0000448499" description="Apolipoprotein C-II" evidence="1">
    <location>
        <begin position="29"/>
        <end position="101"/>
    </location>
</feature>
<feature type="region of interest" description="Lipid binding" evidence="1">
    <location>
        <begin position="66"/>
        <end position="74"/>
    </location>
</feature>
<feature type="region of interest" description="Lipoprotein lipase cofactor" evidence="1">
    <location>
        <begin position="78"/>
        <end position="101"/>
    </location>
</feature>
<reference key="1">
    <citation type="submission" date="2013-04" db="EMBL/GenBank/DDBJ databases">
        <authorList>
            <person name="Di Palma F."/>
            <person name="Alfoldi J."/>
            <person name="Johnson J."/>
            <person name="Berlin A."/>
            <person name="Gnerre S."/>
            <person name="Jaffe D."/>
            <person name="MacCallum I."/>
            <person name="Young S."/>
            <person name="Walker B.J."/>
            <person name="Lindblad-Toh K."/>
        </authorList>
    </citation>
    <scope>NUCLEOTIDE SEQUENCE [LARGE SCALE GENOMIC DNA]</scope>
    <source>
        <tissue>Liver</tissue>
    </source>
</reference>
<reference key="2">
    <citation type="unpublished observations" date="2019-09">
        <authorList>
            <person name="Puppione D.L."/>
        </authorList>
    </citation>
    <scope>IDENTIFICATION</scope>
</reference>